<organism evidence="7">
    <name type="scientific">Trichosanthes anguina</name>
    <name type="common">Snake gourd</name>
    <dbReference type="NCBI Taxonomy" id="50544"/>
    <lineage>
        <taxon>Eukaryota</taxon>
        <taxon>Viridiplantae</taxon>
        <taxon>Streptophyta</taxon>
        <taxon>Embryophyta</taxon>
        <taxon>Tracheophyta</taxon>
        <taxon>Spermatophyta</taxon>
        <taxon>Magnoliopsida</taxon>
        <taxon>eudicotyledons</taxon>
        <taxon>Gunneridae</taxon>
        <taxon>Pentapetalae</taxon>
        <taxon>rosids</taxon>
        <taxon>fabids</taxon>
        <taxon>Cucurbitales</taxon>
        <taxon>Cucurbitaceae</taxon>
        <taxon>Sicyoeae</taxon>
        <taxon>Trichosanthes</taxon>
    </lineage>
</organism>
<dbReference type="PDB" id="4HR6">
    <property type="method" value="X-ray"/>
    <property type="resolution" value="2.25 A"/>
    <property type="chains" value="B=48-253, C=256-519"/>
</dbReference>
<dbReference type="PDBsum" id="4HR6"/>
<dbReference type="SMR" id="U3KRF8"/>
<dbReference type="UniLectin" id="U3KRF8"/>
<dbReference type="iPTMnet" id="U3KRF8"/>
<dbReference type="EvolutionaryTrace" id="U3KRF8"/>
<dbReference type="GO" id="GO:0030246">
    <property type="term" value="F:carbohydrate binding"/>
    <property type="evidence" value="ECO:0007669"/>
    <property type="project" value="UniProtKB-KW"/>
</dbReference>
<dbReference type="GO" id="GO:0030598">
    <property type="term" value="F:rRNA N-glycosylase activity"/>
    <property type="evidence" value="ECO:0007669"/>
    <property type="project" value="InterPro"/>
</dbReference>
<dbReference type="GO" id="GO:0017148">
    <property type="term" value="P:negative regulation of translation"/>
    <property type="evidence" value="ECO:0007669"/>
    <property type="project" value="InterPro"/>
</dbReference>
<dbReference type="CDD" id="cd23482">
    <property type="entry name" value="beta-trefoil_Ricin_SGSL_rpt1"/>
    <property type="match status" value="1"/>
</dbReference>
<dbReference type="CDD" id="cd23489">
    <property type="entry name" value="beta-trefoil_Ricin_SGSL_rpt2"/>
    <property type="match status" value="1"/>
</dbReference>
<dbReference type="Gene3D" id="2.80.10.50">
    <property type="match status" value="2"/>
</dbReference>
<dbReference type="Gene3D" id="6.10.250.2640">
    <property type="match status" value="1"/>
</dbReference>
<dbReference type="Gene3D" id="3.40.420.10">
    <property type="entry name" value="Ricin (A subunit), domain 1"/>
    <property type="match status" value="1"/>
</dbReference>
<dbReference type="Gene3D" id="4.10.470.10">
    <property type="entry name" value="Ricin (A Subunit), domain 2"/>
    <property type="match status" value="1"/>
</dbReference>
<dbReference type="InterPro" id="IPR036041">
    <property type="entry name" value="Ribosome-inact_prot_sf"/>
</dbReference>
<dbReference type="InterPro" id="IPR017989">
    <property type="entry name" value="Ribosome_inactivat_1/2"/>
</dbReference>
<dbReference type="InterPro" id="IPR001574">
    <property type="entry name" value="Ribosome_inactivat_prot"/>
</dbReference>
<dbReference type="InterPro" id="IPR016138">
    <property type="entry name" value="Ribosome_inactivat_prot_sub1"/>
</dbReference>
<dbReference type="InterPro" id="IPR016139">
    <property type="entry name" value="Ribosome_inactivat_prot_sub2"/>
</dbReference>
<dbReference type="InterPro" id="IPR035992">
    <property type="entry name" value="Ricin_B-like_lectins"/>
</dbReference>
<dbReference type="InterPro" id="IPR000772">
    <property type="entry name" value="Ricin_B_lectin"/>
</dbReference>
<dbReference type="PANTHER" id="PTHR33453">
    <property type="match status" value="1"/>
</dbReference>
<dbReference type="PANTHER" id="PTHR33453:SF34">
    <property type="entry name" value="RIBOSOME-INACTIVATING PROTEIN"/>
    <property type="match status" value="1"/>
</dbReference>
<dbReference type="Pfam" id="PF00652">
    <property type="entry name" value="Ricin_B_lectin"/>
    <property type="match status" value="2"/>
</dbReference>
<dbReference type="Pfam" id="PF00161">
    <property type="entry name" value="RIP"/>
    <property type="match status" value="1"/>
</dbReference>
<dbReference type="PRINTS" id="PR00396">
    <property type="entry name" value="SHIGARICIN"/>
</dbReference>
<dbReference type="SMART" id="SM00458">
    <property type="entry name" value="RICIN"/>
    <property type="match status" value="2"/>
</dbReference>
<dbReference type="SUPFAM" id="SSF56371">
    <property type="entry name" value="Ribosome inactivating proteins (RIP)"/>
    <property type="match status" value="1"/>
</dbReference>
<dbReference type="SUPFAM" id="SSF50370">
    <property type="entry name" value="Ricin B-like lectins"/>
    <property type="match status" value="2"/>
</dbReference>
<dbReference type="PROSITE" id="PS50231">
    <property type="entry name" value="RICIN_B_LECTIN"/>
    <property type="match status" value="2"/>
</dbReference>
<proteinExistence type="evidence at protein level"/>
<sequence>NEQANLRLSEANSGTYKTFIGRVREELGSETYRLYGIPVLKHSLSNSNRFYLLTLTSNQDESITLAIDVEDMVAVAYQPAGSHESYFFLNAPQIAFHTLFTDTHQNVLNFDNTFKSLENAAGTTRQTIVLGVDPLDFAISNLFNADPKLLPLSFLVIIQMVLEASKFRFIEQSVAYSFKNEKTFLPDLAIVSLEDNWSEISLQIQASTSLQGLFGSVVELYNSNNELIEVDSIYYPIILANVALQLYHCQVSTGDNECLVETRTTRISGRDALCVDVAGALTSDGSRLILYPCGQQVNQKWTFHSDGTVRSLGKCLATNNSKFGNLVVIYDCSKLAAEDISWDVSVGGTIMNPNYEDLALTSNKATRSTNLTMEVNTYSASQGWRVGNYVQPIIGSIVGLDDMCLEATDGNTNMWLEECVPNQREQSWALYSDGTIRVDDNRELCVTASSSTYDNWKVITILNCDGSNNQRWVFLADGSISTPGNQRLAMDVARSDVDLKKIILHRPHGDLNQQWVLFY</sequence>
<name>SGSL_TRIAN</name>
<protein>
    <recommendedName>
        <fullName evidence="7">Seed lectin</fullName>
        <shortName evidence="7">SGSL</shortName>
    </recommendedName>
    <component>
        <recommendedName>
            <fullName evidence="7">Seed lectin Aalpha chain</fullName>
        </recommendedName>
    </component>
    <component>
        <recommendedName>
            <fullName evidence="7">Seed lectin Abeta chain</fullName>
        </recommendedName>
    </component>
    <component>
        <recommendedName>
            <fullName evidence="7">Seed lectin B chain</fullName>
        </recommendedName>
    </component>
</protein>
<evidence type="ECO:0000250" key="1">
    <source>
        <dbReference type="UniProtKB" id="P02879"/>
    </source>
</evidence>
<evidence type="ECO:0000255" key="2">
    <source>
        <dbReference type="PROSITE-ProRule" id="PRU00174"/>
    </source>
</evidence>
<evidence type="ECO:0000269" key="3">
    <source>
    </source>
</evidence>
<evidence type="ECO:0000269" key="4">
    <source>
    </source>
</evidence>
<evidence type="ECO:0000269" key="5">
    <source>
    </source>
</evidence>
<evidence type="ECO:0000269" key="6">
    <source>
    </source>
</evidence>
<evidence type="ECO:0000303" key="7">
    <source>
    </source>
</evidence>
<evidence type="ECO:0000303" key="8">
    <source>
    </source>
</evidence>
<evidence type="ECO:0000305" key="9"/>
<evidence type="ECO:0000305" key="10">
    <source>
    </source>
</evidence>
<evidence type="ECO:0000305" key="11">
    <source>
    </source>
</evidence>
<evidence type="ECO:0007744" key="12">
    <source>
        <dbReference type="PDB" id="4HR6"/>
    </source>
</evidence>
<evidence type="ECO:0007829" key="13">
    <source>
        <dbReference type="PDB" id="4HR6"/>
    </source>
</evidence>
<comment type="function">
    <text evidence="3 4 5 6">Seed lectin similar to type 2 ribosome-inactivating proteins (PubMed:11375527, PubMed:23897472). The Aalpha and Abeta chains constitute the rRNA glycosidase domain and the B chain the carbohydrate-binding lectin domain (PubMed:23897472). Is predicted to have no glycosidase activity and, hence, to be non-toxic, due to small changes in both the nucleotide binding and carbohydrate binding capabilities (PubMed:11375527, PubMed:23897472). Binds galactose and derivatives with a preference for the beta-anomeric forms (PubMed:10877067, PubMed:8799450). Binds prophyrins (PubMed:10877067). Has hemagglutinating activity towards rabbit and human erythrocytes (PubMed:10877067, PubMed:8799450).</text>
</comment>
<comment type="subunit">
    <text>Heterotrimer consisting of Aalpha, Abeta and B chains with Abeta and B being disulfide-linked.</text>
</comment>
<comment type="domain">
    <text evidence="1">The B chain is composed of two domains with each domain consisting of 3 homologous subdomains (alpha, beta, gamma).</text>
</comment>
<comment type="mass spectrometry">
    <text>The measured range is 1-519.</text>
</comment>
<comment type="similarity">
    <text evidence="9">In the N-terminal section; belongs to the ribosome-inactivating protein family. Type 2 RIP subfamily.</text>
</comment>
<comment type="caution">
    <text evidence="11">Was originally thought to be a heterodimer. However, methods used then would have missed the Aalpha chain.</text>
</comment>
<comment type="caution">
    <text evidence="10">Based on similarity to other family members, it is assumed that all three chains derive from a single precursor but the genomic DNA sequence to support this is not yet available.</text>
</comment>
<reference evidence="9" key="1">
    <citation type="journal article" date="2013" name="Acta Crystallogr. D">
        <title>The sequence and structure of snake gourd (Trichosanthes anguina) seed lectin, a three-chain nontoxic homologue of type II RIPs.</title>
        <authorList>
            <person name="Sharma A."/>
            <person name="Pohlentz G."/>
            <person name="Bobbili K.B."/>
            <person name="Jeyaprakash A.A."/>
            <person name="Chandran T."/>
            <person name="Mormann M."/>
            <person name="Swamy M.J."/>
            <person name="Vijayssan M."/>
        </authorList>
    </citation>
    <scope>PROTEIN SEQUENCE</scope>
    <scope>X-RAY CRYSTALLOGRAPHY (2.25 ANGSTROMS) OF 48-253 AND 256-519</scope>
    <scope>SUBUNIT</scope>
    <scope>MASS SPECTROMETRY</scope>
    <scope>DISULFIDE BONDS</scope>
    <source>
        <tissue evidence="7">Seed</tissue>
    </source>
</reference>
<reference evidence="9" key="2">
    <citation type="journal article" date="1996" name="Biochem. Mol. Biol. Int.">
        <title>Purification in high yield and characterisation of the galactose-specific lectin from the seeds of snake gourd (Trichosanthes anguina).</title>
        <authorList>
            <person name="Komath S.S."/>
            <person name="Nadimpalli S.K."/>
            <person name="Swamy M.J."/>
        </authorList>
    </citation>
    <scope>FUNCTION</scope>
    <scope>PRESENCE OF DISULFIDE BONDS</scope>
    <source>
        <tissue evidence="8">Seed</tissue>
    </source>
</reference>
<reference key="3">
    <citation type="journal article" date="2000" name="J. Photochem. Photobiol. B">
        <title>Fluorescence and absorption spectroscopic studies on the interaction of porphyrins with snake gourd (Trichosanthes anguina) seed lectin.</title>
        <authorList>
            <person name="Komath S.S."/>
            <person name="Kenoth R."/>
            <person name="Giribabu L."/>
            <person name="Maiya B.G."/>
            <person name="Swamy M.J."/>
        </authorList>
    </citation>
    <scope>FUNCTION</scope>
</reference>
<reference key="4">
    <citation type="journal article" date="2001" name="Acta Crystallogr. D">
        <title>Crystallization and preliminary X-ray studies of snake gourd lectin: homology with type II ribosome-inactivating proteins.</title>
        <authorList>
            <person name="Manoj N."/>
            <person name="Jeyaprakash A.A."/>
            <person name="Pratap J.V."/>
            <person name="Komath S.S."/>
            <person name="Kenoth R."/>
            <person name="Swamy M.J."/>
            <person name="Vijayan M."/>
        </authorList>
    </citation>
    <scope>CRYSTALLIZATION</scope>
    <scope>PRELIMINARY X-RAY CRYSTALLOGRAPHY (3.0 ANGSTROMS)</scope>
    <scope>FUNCTION</scope>
</reference>
<accession>U3KRF8</accession>
<accession>B3EWX5</accession>
<accession>U3KRF7</accession>
<keyword id="KW-0002">3D-structure</keyword>
<keyword id="KW-0903">Direct protein sequencing</keyword>
<keyword id="KW-1015">Disulfide bond</keyword>
<keyword id="KW-0325">Glycoprotein</keyword>
<keyword id="KW-0430">Lectin</keyword>
<keyword id="KW-0677">Repeat</keyword>
<feature type="chain" id="PRO_0000436385" description="Seed lectin Aalpha chain" evidence="5">
    <location>
        <begin position="1"/>
        <end position="46"/>
    </location>
</feature>
<feature type="chain" id="PRO_0000436386" description="Seed lectin Abeta chain" evidence="5">
    <location>
        <begin position="47"/>
        <end position="255"/>
    </location>
</feature>
<feature type="chain" id="PRO_0000436387" description="Seed lectin B chain" evidence="5">
    <location>
        <begin position="256"/>
        <end position="519"/>
    </location>
</feature>
<feature type="domain" description="Ricin B-type lectin 1" evidence="2">
    <location>
        <begin position="261"/>
        <end position="387"/>
    </location>
</feature>
<feature type="repeat" description="1-alpha" evidence="1">
    <location>
        <begin position="271"/>
        <end position="311"/>
    </location>
</feature>
<feature type="repeat" description="1-beta" evidence="1">
    <location>
        <begin position="312"/>
        <end position="352"/>
    </location>
</feature>
<feature type="repeat" description="1-gamma" evidence="1">
    <location>
        <begin position="356"/>
        <end position="388"/>
    </location>
</feature>
<feature type="domain" description="Ricin B-type lectin 2" evidence="2">
    <location>
        <begin position="390"/>
        <end position="518"/>
    </location>
</feature>
<feature type="repeat" description="2-alpha" evidence="1">
    <location>
        <begin position="401"/>
        <end position="438"/>
    </location>
</feature>
<feature type="repeat" description="2-beta" evidence="1">
    <location>
        <begin position="442"/>
        <end position="482"/>
    </location>
</feature>
<feature type="repeat" description="2-gamma" evidence="1">
    <location>
        <begin position="486"/>
        <end position="513"/>
    </location>
</feature>
<feature type="binding site" evidence="12">
    <location>
        <begin position="276"/>
        <end position="279"/>
    </location>
    <ligand>
        <name>a carbohydrate</name>
        <dbReference type="ChEBI" id="CHEBI:16646"/>
    </ligand>
</feature>
<feature type="binding site" evidence="12">
    <location>
        <begin position="296"/>
        <end position="298"/>
    </location>
    <ligand>
        <name>a carbohydrate</name>
        <dbReference type="ChEBI" id="CHEBI:16646"/>
    </ligand>
</feature>
<feature type="binding site" evidence="12">
    <location>
        <position position="454"/>
    </location>
    <ligand>
        <name>a carbohydrate</name>
        <dbReference type="ChEBI" id="CHEBI:16646"/>
    </ligand>
</feature>
<feature type="binding site" evidence="12">
    <location>
        <begin position="491"/>
        <end position="494"/>
    </location>
    <ligand>
        <name>a carbohydrate</name>
        <dbReference type="ChEBI" id="CHEBI:16646"/>
    </ligand>
</feature>
<feature type="binding site" evidence="12">
    <location>
        <begin position="505"/>
        <end position="508"/>
    </location>
    <ligand>
        <name>a carbohydrate</name>
        <dbReference type="ChEBI" id="CHEBI:16646"/>
    </ligand>
</feature>
<feature type="binding site" evidence="12">
    <location>
        <position position="512"/>
    </location>
    <ligand>
        <name>a carbohydrate</name>
        <dbReference type="ChEBI" id="CHEBI:16646"/>
    </ligand>
</feature>
<feature type="glycosylation site" description="N-linked (GlcNAc...) asparagine" evidence="5">
    <location>
        <position position="370"/>
    </location>
</feature>
<feature type="disulfide bond" description="Interchain (between Abeta and B chains)" evidence="5">
    <location>
        <begin position="249"/>
        <end position="258"/>
    </location>
</feature>
<feature type="disulfide bond" evidence="2 12">
    <location>
        <begin position="274"/>
        <end position="293"/>
    </location>
</feature>
<feature type="disulfide bond" evidence="2 12">
    <location>
        <begin position="315"/>
        <end position="332"/>
    </location>
</feature>
<feature type="disulfide bond" evidence="2 12">
    <location>
        <begin position="404"/>
        <end position="419"/>
    </location>
</feature>
<feature type="disulfide bond" evidence="2 12">
    <location>
        <begin position="445"/>
        <end position="464"/>
    </location>
</feature>
<feature type="non-consecutive residues" evidence="10">
    <location>
        <begin position="46"/>
        <end position="47"/>
    </location>
</feature>
<feature type="non-consecutive residues" evidence="10">
    <location>
        <begin position="255"/>
        <end position="256"/>
    </location>
</feature>
<feature type="strand" evidence="13">
    <location>
        <begin position="50"/>
        <end position="56"/>
    </location>
</feature>
<feature type="strand" evidence="13">
    <location>
        <begin position="62"/>
        <end position="68"/>
    </location>
</feature>
<feature type="turn" evidence="13">
    <location>
        <begin position="69"/>
        <end position="72"/>
    </location>
</feature>
<feature type="strand" evidence="13">
    <location>
        <begin position="73"/>
        <end position="79"/>
    </location>
</feature>
<feature type="strand" evidence="13">
    <location>
        <begin position="83"/>
        <end position="87"/>
    </location>
</feature>
<feature type="helix" evidence="13">
    <location>
        <begin position="93"/>
        <end position="98"/>
    </location>
</feature>
<feature type="strand" evidence="13">
    <location>
        <begin position="103"/>
        <end position="107"/>
    </location>
</feature>
<feature type="helix" evidence="13">
    <location>
        <begin position="114"/>
        <end position="121"/>
    </location>
</feature>
<feature type="helix" evidence="13">
    <location>
        <begin position="125"/>
        <end position="127"/>
    </location>
</feature>
<feature type="helix" evidence="13">
    <location>
        <begin position="132"/>
        <end position="143"/>
    </location>
</feature>
<feature type="turn" evidence="13">
    <location>
        <begin position="147"/>
        <end position="149"/>
    </location>
</feature>
<feature type="helix" evidence="13">
    <location>
        <begin position="150"/>
        <end position="166"/>
    </location>
</feature>
<feature type="helix" evidence="13">
    <location>
        <begin position="168"/>
        <end position="179"/>
    </location>
</feature>
<feature type="helix" evidence="13">
    <location>
        <begin position="188"/>
        <end position="206"/>
    </location>
</feature>
<feature type="helix" evidence="13">
    <location>
        <begin position="207"/>
        <end position="209"/>
    </location>
</feature>
<feature type="turn" evidence="13">
    <location>
        <begin position="210"/>
        <end position="212"/>
    </location>
</feature>
<feature type="strand" evidence="13">
    <location>
        <begin position="213"/>
        <end position="221"/>
    </location>
</feature>
<feature type="strand" evidence="13">
    <location>
        <begin position="227"/>
        <end position="233"/>
    </location>
</feature>
<feature type="helix" evidence="13">
    <location>
        <begin position="236"/>
        <end position="239"/>
    </location>
</feature>
<feature type="strand" evidence="13">
    <location>
        <begin position="262"/>
        <end position="265"/>
    </location>
</feature>
<feature type="helix" evidence="13">
    <location>
        <begin position="270"/>
        <end position="272"/>
    </location>
</feature>
<feature type="strand" evidence="13">
    <location>
        <begin position="274"/>
        <end position="277"/>
    </location>
</feature>
<feature type="helix" evidence="13">
    <location>
        <begin position="278"/>
        <end position="280"/>
    </location>
</feature>
<feature type="strand" evidence="13">
    <location>
        <begin position="287"/>
        <end position="291"/>
    </location>
</feature>
<feature type="helix" evidence="13">
    <location>
        <begin position="297"/>
        <end position="299"/>
    </location>
</feature>
<feature type="strand" evidence="13">
    <location>
        <begin position="301"/>
        <end position="304"/>
    </location>
</feature>
<feature type="strand" evidence="13">
    <location>
        <begin position="309"/>
        <end position="311"/>
    </location>
</feature>
<feature type="strand" evidence="13">
    <location>
        <begin position="314"/>
        <end position="317"/>
    </location>
</feature>
<feature type="turn" evidence="13">
    <location>
        <begin position="320"/>
        <end position="325"/>
    </location>
</feature>
<feature type="strand" evidence="13">
    <location>
        <begin position="328"/>
        <end position="330"/>
    </location>
</feature>
<feature type="turn" evidence="13">
    <location>
        <begin position="332"/>
        <end position="334"/>
    </location>
</feature>
<feature type="helix" evidence="13">
    <location>
        <begin position="337"/>
        <end position="339"/>
    </location>
</feature>
<feature type="strand" evidence="13">
    <location>
        <begin position="358"/>
        <end position="361"/>
    </location>
</feature>
<feature type="strand" evidence="13">
    <location>
        <begin position="372"/>
        <end position="375"/>
    </location>
</feature>
<feature type="helix" evidence="13">
    <location>
        <begin position="380"/>
        <end position="382"/>
    </location>
</feature>
<feature type="strand" evidence="13">
    <location>
        <begin position="385"/>
        <end position="388"/>
    </location>
</feature>
<feature type="strand" evidence="13">
    <location>
        <begin position="393"/>
        <end position="398"/>
    </location>
</feature>
<feature type="helix" evidence="13">
    <location>
        <begin position="400"/>
        <end position="402"/>
    </location>
</feature>
<feature type="strand" evidence="13">
    <location>
        <begin position="403"/>
        <end position="408"/>
    </location>
</feature>
<feature type="turn" evidence="13">
    <location>
        <begin position="409"/>
        <end position="412"/>
    </location>
</feature>
<feature type="strand" evidence="13">
    <location>
        <begin position="413"/>
        <end position="418"/>
    </location>
</feature>
<feature type="helix" evidence="13">
    <location>
        <begin position="424"/>
        <end position="426"/>
    </location>
</feature>
<feature type="strand" evidence="13">
    <location>
        <begin position="428"/>
        <end position="430"/>
    </location>
</feature>
<feature type="strand" evidence="13">
    <location>
        <begin position="436"/>
        <end position="438"/>
    </location>
</feature>
<feature type="strand" evidence="13">
    <location>
        <begin position="441"/>
        <end position="453"/>
    </location>
</feature>
<feature type="strand" evidence="13">
    <location>
        <begin position="456"/>
        <end position="463"/>
    </location>
</feature>
<feature type="strand" evidence="13">
    <location>
        <begin position="483"/>
        <end position="486"/>
    </location>
</feature>
<feature type="strand" evidence="13">
    <location>
        <begin position="489"/>
        <end position="492"/>
    </location>
</feature>
<feature type="helix" evidence="13">
    <location>
        <begin position="493"/>
        <end position="495"/>
    </location>
</feature>
<feature type="helix" evidence="13">
    <location>
        <begin position="497"/>
        <end position="499"/>
    </location>
</feature>
<feature type="strand" evidence="13">
    <location>
        <begin position="502"/>
        <end position="505"/>
    </location>
</feature>
<feature type="helix" evidence="13">
    <location>
        <begin position="511"/>
        <end position="513"/>
    </location>
</feature>
<feature type="strand" evidence="13">
    <location>
        <begin position="516"/>
        <end position="518"/>
    </location>
</feature>